<sequence length="74" mass="8470">MERAQCLRKGILSFERSLEQRSLILSPRLEYSGAITAHCSLDLLDSTNPPASAFWVVETTDTEDEREKKREITE</sequence>
<name>CU037_HUMAN</name>
<protein>
    <recommendedName>
        <fullName evidence="2">Putative uncharacterized protein encoded by LINC01549</fullName>
    </recommendedName>
</protein>
<feature type="chain" id="PRO_0000307768" description="Putative uncharacterized protein encoded by LINC01549">
    <location>
        <begin position="1"/>
        <end position="74"/>
    </location>
</feature>
<accession>A6NIU2</accession>
<organism>
    <name type="scientific">Homo sapiens</name>
    <name type="common">Human</name>
    <dbReference type="NCBI Taxonomy" id="9606"/>
    <lineage>
        <taxon>Eukaryota</taxon>
        <taxon>Metazoa</taxon>
        <taxon>Chordata</taxon>
        <taxon>Craniata</taxon>
        <taxon>Vertebrata</taxon>
        <taxon>Euteleostomi</taxon>
        <taxon>Mammalia</taxon>
        <taxon>Eutheria</taxon>
        <taxon>Euarchontoglires</taxon>
        <taxon>Primates</taxon>
        <taxon>Haplorrhini</taxon>
        <taxon>Catarrhini</taxon>
        <taxon>Hominidae</taxon>
        <taxon>Homo</taxon>
    </lineage>
</organism>
<dbReference type="EMBL" id="AP000952">
    <property type="status" value="NOT_ANNOTATED_CDS"/>
    <property type="molecule type" value="Genomic_DNA"/>
</dbReference>
<dbReference type="EMBL" id="CH471079">
    <property type="protein sequence ID" value="EAX10035.1"/>
    <property type="molecule type" value="Genomic_DNA"/>
</dbReference>
<dbReference type="iPTMnet" id="A6NIU2"/>
<dbReference type="PhosphoSitePlus" id="A6NIU2"/>
<dbReference type="BioMuta" id="HGNC:1277"/>
<dbReference type="ProteomicsDB" id="1285"/>
<dbReference type="AGR" id="HGNC:1277"/>
<dbReference type="GeneCards" id="LINC01549"/>
<dbReference type="HGNC" id="HGNC:1277">
    <property type="gene designation" value="LINC01549"/>
</dbReference>
<dbReference type="neXtProt" id="NX_A6NIU2"/>
<dbReference type="InParanoid" id="A6NIU2"/>
<dbReference type="PAN-GO" id="A6NIU2">
    <property type="GO annotations" value="0 GO annotations based on evolutionary models"/>
</dbReference>
<dbReference type="PhylomeDB" id="A6NIU2"/>
<dbReference type="Pharos" id="A6NIU2">
    <property type="development level" value="Tdark"/>
</dbReference>
<dbReference type="Proteomes" id="UP000005640">
    <property type="component" value="Unplaced"/>
</dbReference>
<dbReference type="RNAct" id="A6NIU2">
    <property type="molecule type" value="protein"/>
</dbReference>
<dbReference type="PANTHER" id="PTHR12138:SF162">
    <property type="entry name" value="CHROMOSOME UNDETERMINED SCAFFOLD_275, WHOLE GENOME SHOTGUN SEQUENCE"/>
    <property type="match status" value="1"/>
</dbReference>
<dbReference type="PANTHER" id="PTHR12138">
    <property type="entry name" value="PRIMATE-EXPANDED PROTEIN FAMILY"/>
    <property type="match status" value="1"/>
</dbReference>
<gene>
    <name evidence="2" type="primary">LINC01549</name>
    <name evidence="2" type="synonym">C21orf37</name>
</gene>
<reference key="1">
    <citation type="journal article" date="2000" name="Nature">
        <title>The DNA sequence of human chromosome 21.</title>
        <authorList>
            <person name="Hattori M."/>
            <person name="Fujiyama A."/>
            <person name="Taylor T.D."/>
            <person name="Watanabe H."/>
            <person name="Yada T."/>
            <person name="Park H.-S."/>
            <person name="Toyoda A."/>
            <person name="Ishii K."/>
            <person name="Totoki Y."/>
            <person name="Choi D.-K."/>
            <person name="Groner Y."/>
            <person name="Soeda E."/>
            <person name="Ohki M."/>
            <person name="Takagi T."/>
            <person name="Sakaki Y."/>
            <person name="Taudien S."/>
            <person name="Blechschmidt K."/>
            <person name="Polley A."/>
            <person name="Menzel U."/>
            <person name="Delabar J."/>
            <person name="Kumpf K."/>
            <person name="Lehmann R."/>
            <person name="Patterson D."/>
            <person name="Reichwald K."/>
            <person name="Rump A."/>
            <person name="Schillhabel M."/>
            <person name="Schudy A."/>
            <person name="Zimmermann W."/>
            <person name="Rosenthal A."/>
            <person name="Kudoh J."/>
            <person name="Shibuya K."/>
            <person name="Kawasaki K."/>
            <person name="Asakawa S."/>
            <person name="Shintani A."/>
            <person name="Sasaki T."/>
            <person name="Nagamine K."/>
            <person name="Mitsuyama S."/>
            <person name="Antonarakis S.E."/>
            <person name="Minoshima S."/>
            <person name="Shimizu N."/>
            <person name="Nordsiek G."/>
            <person name="Hornischer K."/>
            <person name="Brandt P."/>
            <person name="Scharfe M."/>
            <person name="Schoen O."/>
            <person name="Desario A."/>
            <person name="Reichelt J."/>
            <person name="Kauer G."/>
            <person name="Bloecker H."/>
            <person name="Ramser J."/>
            <person name="Beck A."/>
            <person name="Klages S."/>
            <person name="Hennig S."/>
            <person name="Riesselmann L."/>
            <person name="Dagand E."/>
            <person name="Wehrmeyer S."/>
            <person name="Borzym K."/>
            <person name="Gardiner K."/>
            <person name="Nizetic D."/>
            <person name="Francis F."/>
            <person name="Lehrach H."/>
            <person name="Reinhardt R."/>
            <person name="Yaspo M.-L."/>
        </authorList>
    </citation>
    <scope>NUCLEOTIDE SEQUENCE [LARGE SCALE GENOMIC DNA]</scope>
</reference>
<reference key="2">
    <citation type="submission" date="2005-09" db="EMBL/GenBank/DDBJ databases">
        <authorList>
            <person name="Mural R.J."/>
            <person name="Istrail S."/>
            <person name="Sutton G.G."/>
            <person name="Florea L."/>
            <person name="Halpern A.L."/>
            <person name="Mobarry C.M."/>
            <person name="Lippert R."/>
            <person name="Walenz B."/>
            <person name="Shatkay H."/>
            <person name="Dew I."/>
            <person name="Miller J.R."/>
            <person name="Flanigan M.J."/>
            <person name="Edwards N.J."/>
            <person name="Bolanos R."/>
            <person name="Fasulo D."/>
            <person name="Halldorsson B.V."/>
            <person name="Hannenhalli S."/>
            <person name="Turner R."/>
            <person name="Yooseph S."/>
            <person name="Lu F."/>
            <person name="Nusskern D.R."/>
            <person name="Shue B.C."/>
            <person name="Zheng X.H."/>
            <person name="Zhong F."/>
            <person name="Delcher A.L."/>
            <person name="Huson D.H."/>
            <person name="Kravitz S.A."/>
            <person name="Mouchard L."/>
            <person name="Reinert K."/>
            <person name="Remington K.A."/>
            <person name="Clark A.G."/>
            <person name="Waterman M.S."/>
            <person name="Eichler E.E."/>
            <person name="Adams M.D."/>
            <person name="Hunkapiller M.W."/>
            <person name="Myers E.W."/>
            <person name="Venter J.C."/>
        </authorList>
    </citation>
    <scope>NUCLEOTIDE SEQUENCE [LARGE SCALE GENOMIC DNA]</scope>
</reference>
<proteinExistence type="uncertain"/>
<comment type="caution">
    <text evidence="1">Could be the product of a pseudogene.</text>
</comment>
<evidence type="ECO:0000305" key="1"/>
<evidence type="ECO:0000312" key="2">
    <source>
        <dbReference type="HGNC" id="HGNC:1277"/>
    </source>
</evidence>
<keyword id="KW-1185">Reference proteome</keyword>